<reference key="1">
    <citation type="journal article" date="2005" name="Mol. Genet. Genomics">
        <title>A fine physical map of the rice chromosome 5.</title>
        <authorList>
            <person name="Cheng C.-H."/>
            <person name="Chung M.C."/>
            <person name="Liu S.-M."/>
            <person name="Chen S.-K."/>
            <person name="Kao F.Y."/>
            <person name="Lin S.-J."/>
            <person name="Hsiao S.-H."/>
            <person name="Tseng I.C."/>
            <person name="Hsing Y.-I.C."/>
            <person name="Wu H.-P."/>
            <person name="Chen C.-S."/>
            <person name="Shaw J.-F."/>
            <person name="Wu J."/>
            <person name="Matsumoto T."/>
            <person name="Sasaki T."/>
            <person name="Chen H.-C."/>
            <person name="Chow T.-Y."/>
        </authorList>
    </citation>
    <scope>NUCLEOTIDE SEQUENCE [LARGE SCALE GENOMIC DNA]</scope>
    <source>
        <strain>cv. Nipponbare</strain>
    </source>
</reference>
<reference key="2">
    <citation type="journal article" date="2005" name="Nature">
        <title>The map-based sequence of the rice genome.</title>
        <authorList>
            <consortium name="International rice genome sequencing project (IRGSP)"/>
        </authorList>
    </citation>
    <scope>NUCLEOTIDE SEQUENCE [LARGE SCALE GENOMIC DNA]</scope>
    <source>
        <strain>cv. Nipponbare</strain>
    </source>
</reference>
<reference key="3">
    <citation type="journal article" date="2008" name="Nucleic Acids Res.">
        <title>The rice annotation project database (RAP-DB): 2008 update.</title>
        <authorList>
            <consortium name="The rice annotation project (RAP)"/>
        </authorList>
    </citation>
    <scope>GENOME REANNOTATION</scope>
    <source>
        <strain>cv. Nipponbare</strain>
    </source>
</reference>
<reference key="4">
    <citation type="journal article" date="2013" name="Rice">
        <title>Improvement of the Oryza sativa Nipponbare reference genome using next generation sequence and optical map data.</title>
        <authorList>
            <person name="Kawahara Y."/>
            <person name="de la Bastide M."/>
            <person name="Hamilton J.P."/>
            <person name="Kanamori H."/>
            <person name="McCombie W.R."/>
            <person name="Ouyang S."/>
            <person name="Schwartz D.C."/>
            <person name="Tanaka T."/>
            <person name="Wu J."/>
            <person name="Zhou S."/>
            <person name="Childs K.L."/>
            <person name="Davidson R.M."/>
            <person name="Lin H."/>
            <person name="Quesada-Ocampo L."/>
            <person name="Vaillancourt B."/>
            <person name="Sakai H."/>
            <person name="Lee S.S."/>
            <person name="Kim J."/>
            <person name="Numa H."/>
            <person name="Itoh T."/>
            <person name="Buell C.R."/>
            <person name="Matsumoto T."/>
        </authorList>
    </citation>
    <scope>GENOME REANNOTATION</scope>
    <source>
        <strain>cv. Nipponbare</strain>
    </source>
</reference>
<reference key="5">
    <citation type="journal article" date="2005" name="PLoS Biol.">
        <title>The genomes of Oryza sativa: a history of duplications.</title>
        <authorList>
            <person name="Yu J."/>
            <person name="Wang J."/>
            <person name="Lin W."/>
            <person name="Li S."/>
            <person name="Li H."/>
            <person name="Zhou J."/>
            <person name="Ni P."/>
            <person name="Dong W."/>
            <person name="Hu S."/>
            <person name="Zeng C."/>
            <person name="Zhang J."/>
            <person name="Zhang Y."/>
            <person name="Li R."/>
            <person name="Xu Z."/>
            <person name="Li S."/>
            <person name="Li X."/>
            <person name="Zheng H."/>
            <person name="Cong L."/>
            <person name="Lin L."/>
            <person name="Yin J."/>
            <person name="Geng J."/>
            <person name="Li G."/>
            <person name="Shi J."/>
            <person name="Liu J."/>
            <person name="Lv H."/>
            <person name="Li J."/>
            <person name="Wang J."/>
            <person name="Deng Y."/>
            <person name="Ran L."/>
            <person name="Shi X."/>
            <person name="Wang X."/>
            <person name="Wu Q."/>
            <person name="Li C."/>
            <person name="Ren X."/>
            <person name="Wang J."/>
            <person name="Wang X."/>
            <person name="Li D."/>
            <person name="Liu D."/>
            <person name="Zhang X."/>
            <person name="Ji Z."/>
            <person name="Zhao W."/>
            <person name="Sun Y."/>
            <person name="Zhang Z."/>
            <person name="Bao J."/>
            <person name="Han Y."/>
            <person name="Dong L."/>
            <person name="Ji J."/>
            <person name="Chen P."/>
            <person name="Wu S."/>
            <person name="Liu J."/>
            <person name="Xiao Y."/>
            <person name="Bu D."/>
            <person name="Tan J."/>
            <person name="Yang L."/>
            <person name="Ye C."/>
            <person name="Zhang J."/>
            <person name="Xu J."/>
            <person name="Zhou Y."/>
            <person name="Yu Y."/>
            <person name="Zhang B."/>
            <person name="Zhuang S."/>
            <person name="Wei H."/>
            <person name="Liu B."/>
            <person name="Lei M."/>
            <person name="Yu H."/>
            <person name="Li Y."/>
            <person name="Xu H."/>
            <person name="Wei S."/>
            <person name="He X."/>
            <person name="Fang L."/>
            <person name="Zhang Z."/>
            <person name="Zhang Y."/>
            <person name="Huang X."/>
            <person name="Su Z."/>
            <person name="Tong W."/>
            <person name="Li J."/>
            <person name="Tong Z."/>
            <person name="Li S."/>
            <person name="Ye J."/>
            <person name="Wang L."/>
            <person name="Fang L."/>
            <person name="Lei T."/>
            <person name="Chen C.-S."/>
            <person name="Chen H.-C."/>
            <person name="Xu Z."/>
            <person name="Li H."/>
            <person name="Huang H."/>
            <person name="Zhang F."/>
            <person name="Xu H."/>
            <person name="Li N."/>
            <person name="Zhao C."/>
            <person name="Li S."/>
            <person name="Dong L."/>
            <person name="Huang Y."/>
            <person name="Li L."/>
            <person name="Xi Y."/>
            <person name="Qi Q."/>
            <person name="Li W."/>
            <person name="Zhang B."/>
            <person name="Hu W."/>
            <person name="Zhang Y."/>
            <person name="Tian X."/>
            <person name="Jiao Y."/>
            <person name="Liang X."/>
            <person name="Jin J."/>
            <person name="Gao L."/>
            <person name="Zheng W."/>
            <person name="Hao B."/>
            <person name="Liu S.-M."/>
            <person name="Wang W."/>
            <person name="Yuan L."/>
            <person name="Cao M."/>
            <person name="McDermott J."/>
            <person name="Samudrala R."/>
            <person name="Wang J."/>
            <person name="Wong G.K.-S."/>
            <person name="Yang H."/>
        </authorList>
    </citation>
    <scope>NUCLEOTIDE SEQUENCE [LARGE SCALE GENOMIC DNA]</scope>
    <source>
        <strain>cv. Nipponbare</strain>
    </source>
</reference>
<reference key="6">
    <citation type="journal article" date="2003" name="Science">
        <title>Collection, mapping, and annotation of over 28,000 cDNA clones from japonica rice.</title>
        <authorList>
            <consortium name="The rice full-length cDNA consortium"/>
        </authorList>
    </citation>
    <scope>NUCLEOTIDE SEQUENCE [LARGE SCALE MRNA]</scope>
    <source>
        <strain>cv. Nipponbare</strain>
    </source>
</reference>
<sequence>MQPLRPSPAAGGWAGVAGVGPTTVDEASMERSKSFVKALQELKNLRPQLYSASEYCEKSYLHSEQKQMVLENLKDYAVRAVVNAVDHLGTVAYKLTDLFEQQASEVSTVELKVARLNQQILTCQIFTDRAGLRQQKIGGTTFKHHKHYILPSTGHKRTQAARLQTDNGQDSKPKPYPSAKTLSWHLSSENSISTTGAQKYTFTLGDTISSKPASNGSMYLLGKDIPASPMHKPLQPNGNTSFDAKKNVGSKDQPGFMHMSTFNALDKPRGREIQKVPVSTKSMLATLFIKHKSAKTRKASVR</sequence>
<evidence type="ECO:0000250" key="1"/>
<evidence type="ECO:0000256" key="2">
    <source>
        <dbReference type="SAM" id="MobiDB-lite"/>
    </source>
</evidence>
<evidence type="ECO:0000305" key="3"/>
<evidence type="ECO:0000312" key="4">
    <source>
        <dbReference type="EMBL" id="EEE64851.1"/>
    </source>
</evidence>
<accession>Q6I588</accession>
<accession>Q0DFK5</accession>
<proteinExistence type="evidence at transcript level"/>
<protein>
    <recommendedName>
        <fullName>Probable protein ABIL4</fullName>
    </recommendedName>
    <alternativeName>
        <fullName>Abl interactor-like protein 4</fullName>
    </alternativeName>
</protein>
<name>ABIL4_ORYSJ</name>
<keyword id="KW-0963">Cytoplasm</keyword>
<keyword id="KW-0206">Cytoskeleton</keyword>
<keyword id="KW-1185">Reference proteome</keyword>
<gene>
    <name type="ordered locus">Os05g0585400</name>
    <name type="ordered locus">LOC_Os05g50800</name>
    <name evidence="4" type="ORF">OsJ_19708</name>
    <name type="ORF">OSJNBa0009C07.8</name>
</gene>
<dbReference type="EMBL" id="AC137608">
    <property type="protein sequence ID" value="AAT47063.1"/>
    <property type="molecule type" value="Genomic_DNA"/>
</dbReference>
<dbReference type="EMBL" id="AP008211">
    <property type="protein sequence ID" value="BAF18368.1"/>
    <property type="molecule type" value="Genomic_DNA"/>
</dbReference>
<dbReference type="EMBL" id="AP014961">
    <property type="protein sequence ID" value="BAS95567.1"/>
    <property type="molecule type" value="Genomic_DNA"/>
</dbReference>
<dbReference type="EMBL" id="CM000142">
    <property type="protein sequence ID" value="EEE64851.1"/>
    <property type="molecule type" value="Genomic_DNA"/>
</dbReference>
<dbReference type="EMBL" id="AK067538">
    <property type="protein sequence ID" value="BAG90465.1"/>
    <property type="molecule type" value="mRNA"/>
</dbReference>
<dbReference type="RefSeq" id="XP_015640054.1">
    <property type="nucleotide sequence ID" value="XM_015784568.1"/>
</dbReference>
<dbReference type="RefSeq" id="XP_015640055.1">
    <property type="nucleotide sequence ID" value="XM_015784569.1"/>
</dbReference>
<dbReference type="SMR" id="Q6I588"/>
<dbReference type="FunCoup" id="Q6I588">
    <property type="interactions" value="2005"/>
</dbReference>
<dbReference type="STRING" id="39947.Q6I588"/>
<dbReference type="PaxDb" id="39947-Q6I588"/>
<dbReference type="EnsemblPlants" id="Os05t0585400-01">
    <property type="protein sequence ID" value="Os05t0585400-01"/>
    <property type="gene ID" value="Os05g0585400"/>
</dbReference>
<dbReference type="Gramene" id="Os05t0585400-01">
    <property type="protein sequence ID" value="Os05t0585400-01"/>
    <property type="gene ID" value="Os05g0585400"/>
</dbReference>
<dbReference type="KEGG" id="dosa:Os05g0585400"/>
<dbReference type="eggNOG" id="KOG2546">
    <property type="taxonomic scope" value="Eukaryota"/>
</dbReference>
<dbReference type="HOGENOM" id="CLU_054853_0_0_1"/>
<dbReference type="InParanoid" id="Q6I588"/>
<dbReference type="OMA" id="MGANIKH"/>
<dbReference type="OrthoDB" id="5971719at2759"/>
<dbReference type="Proteomes" id="UP000000763">
    <property type="component" value="Chromosome 5"/>
</dbReference>
<dbReference type="Proteomes" id="UP000007752">
    <property type="component" value="Chromosome 5"/>
</dbReference>
<dbReference type="Proteomes" id="UP000059680">
    <property type="component" value="Chromosome 5"/>
</dbReference>
<dbReference type="GO" id="GO:0005737">
    <property type="term" value="C:cytoplasm"/>
    <property type="evidence" value="ECO:0007669"/>
    <property type="project" value="UniProtKB-KW"/>
</dbReference>
<dbReference type="GO" id="GO:0005856">
    <property type="term" value="C:cytoskeleton"/>
    <property type="evidence" value="ECO:0007669"/>
    <property type="project" value="UniProtKB-SubCell"/>
</dbReference>
<dbReference type="Gene3D" id="6.10.140.1620">
    <property type="match status" value="1"/>
</dbReference>
<dbReference type="InterPro" id="IPR028457">
    <property type="entry name" value="ABI"/>
</dbReference>
<dbReference type="PANTHER" id="PTHR10460">
    <property type="entry name" value="ABL INTERACTOR FAMILY MEMBER"/>
    <property type="match status" value="1"/>
</dbReference>
<dbReference type="PANTHER" id="PTHR10460:SF61">
    <property type="entry name" value="PROTEIN ABIL4-RELATED"/>
    <property type="match status" value="1"/>
</dbReference>
<feature type="chain" id="PRO_0000191801" description="Probable protein ABIL4">
    <location>
        <begin position="1"/>
        <end position="302"/>
    </location>
</feature>
<feature type="region of interest" description="Disordered" evidence="2">
    <location>
        <begin position="151"/>
        <end position="179"/>
    </location>
</feature>
<feature type="region of interest" description="Disordered" evidence="2">
    <location>
        <begin position="220"/>
        <end position="256"/>
    </location>
</feature>
<feature type="compositionally biased region" description="Polar residues" evidence="2">
    <location>
        <begin position="161"/>
        <end position="170"/>
    </location>
</feature>
<comment type="function">
    <text evidence="1">Involved in regulation of actin and microtubule organization. Part of a WAVE complex that activates the Arp2/3 complex (By similarity).</text>
</comment>
<comment type="subunit">
    <text evidence="1">Binds SCAR.</text>
</comment>
<comment type="subcellular location">
    <subcellularLocation>
        <location evidence="1">Cytoplasm</location>
        <location evidence="1">Cytoskeleton</location>
    </subcellularLocation>
</comment>
<comment type="similarity">
    <text evidence="3">Belongs to the ABI family.</text>
</comment>
<organism>
    <name type="scientific">Oryza sativa subsp. japonica</name>
    <name type="common">Rice</name>
    <dbReference type="NCBI Taxonomy" id="39947"/>
    <lineage>
        <taxon>Eukaryota</taxon>
        <taxon>Viridiplantae</taxon>
        <taxon>Streptophyta</taxon>
        <taxon>Embryophyta</taxon>
        <taxon>Tracheophyta</taxon>
        <taxon>Spermatophyta</taxon>
        <taxon>Magnoliopsida</taxon>
        <taxon>Liliopsida</taxon>
        <taxon>Poales</taxon>
        <taxon>Poaceae</taxon>
        <taxon>BOP clade</taxon>
        <taxon>Oryzoideae</taxon>
        <taxon>Oryzeae</taxon>
        <taxon>Oryzinae</taxon>
        <taxon>Oryza</taxon>
        <taxon>Oryza sativa</taxon>
    </lineage>
</organism>